<proteinExistence type="evidence at protein level"/>
<name>WDR6_MOUSE</name>
<gene>
    <name type="primary">Wdr6</name>
</gene>
<feature type="chain" id="PRO_0000393460" description="tRNA (34-2'-O)-methyltransferase regulator WDR6">
    <location>
        <begin position="1"/>
        <end position="1125"/>
    </location>
</feature>
<feature type="repeat" description="WD 1">
    <location>
        <begin position="53"/>
        <end position="97"/>
    </location>
</feature>
<feature type="repeat" description="WD 2">
    <location>
        <begin position="105"/>
        <end position="143"/>
    </location>
</feature>
<feature type="repeat" description="WD 3">
    <location>
        <begin position="147"/>
        <end position="189"/>
    </location>
</feature>
<feature type="repeat" description="WD 4">
    <location>
        <begin position="200"/>
        <end position="238"/>
    </location>
</feature>
<feature type="repeat" description="WD 5">
    <location>
        <begin position="247"/>
        <end position="285"/>
    </location>
</feature>
<feature type="repeat" description="WD 6">
    <location>
        <begin position="289"/>
        <end position="327"/>
    </location>
</feature>
<feature type="repeat" description="WD 7">
    <location>
        <begin position="335"/>
        <end position="376"/>
    </location>
</feature>
<feature type="repeat" description="WD 8">
    <location>
        <begin position="381"/>
        <end position="422"/>
    </location>
</feature>
<feature type="repeat" description="WD 9">
    <location>
        <begin position="425"/>
        <end position="470"/>
    </location>
</feature>
<feature type="repeat" description="WD 10">
    <location>
        <begin position="476"/>
        <end position="520"/>
    </location>
</feature>
<feature type="repeat" description="WD 11">
    <location>
        <begin position="559"/>
        <end position="598"/>
    </location>
</feature>
<feature type="repeat" description="WD 12">
    <location>
        <begin position="604"/>
        <end position="642"/>
    </location>
</feature>
<feature type="repeat" description="WD 13">
    <location>
        <begin position="645"/>
        <end position="684"/>
    </location>
</feature>
<feature type="repeat" description="WD 14">
    <location>
        <begin position="739"/>
        <end position="785"/>
    </location>
</feature>
<feature type="repeat" description="WD 15">
    <location>
        <begin position="848"/>
        <end position="897"/>
    </location>
</feature>
<feature type="repeat" description="WD 16">
    <location>
        <begin position="905"/>
        <end position="950"/>
    </location>
</feature>
<feature type="repeat" description="WD 17">
    <location>
        <begin position="974"/>
        <end position="1016"/>
    </location>
</feature>
<feature type="repeat" description="WD 18">
    <location>
        <begin position="1040"/>
        <end position="1077"/>
    </location>
</feature>
<feature type="repeat" description="WD 19">
    <location>
        <begin position="1083"/>
        <end position="1125"/>
    </location>
</feature>
<feature type="modified residue" description="N-acetylmethionine" evidence="2">
    <location>
        <position position="1"/>
    </location>
</feature>
<protein>
    <recommendedName>
        <fullName evidence="3">tRNA (34-2'-O)-methyltransferase regulator WDR6</fullName>
    </recommendedName>
    <alternativeName>
        <fullName>WD repeat-containing protein 6</fullName>
        <shortName>mWDR6</shortName>
    </alternativeName>
</protein>
<evidence type="ECO:0000250" key="1">
    <source>
        <dbReference type="UniProtKB" id="Q5XFW6"/>
    </source>
</evidence>
<evidence type="ECO:0000250" key="2">
    <source>
        <dbReference type="UniProtKB" id="Q9NNW5"/>
    </source>
</evidence>
<evidence type="ECO:0000305" key="3"/>
<keyword id="KW-0007">Acetylation</keyword>
<keyword id="KW-0131">Cell cycle</keyword>
<keyword id="KW-0963">Cytoplasm</keyword>
<keyword id="KW-1185">Reference proteome</keyword>
<keyword id="KW-0677">Repeat</keyword>
<keyword id="KW-0819">tRNA processing</keyword>
<keyword id="KW-0853">WD repeat</keyword>
<accession>Q99ME2</accession>
<sequence length="1125" mass="121898">MDAFGDYVWPRATSELILLPVTGLECVGDRLLAGEGPDLLVYNLDLGGHLRMVKRVQNLLGHFLIHGFRVRPEPKGDLDSEAMIAVFGSKGLKVVKVSWGQSHLRELWRSGLWNMSDWIWDVRWIEGNVAVALGHNSVVLYDPVIGCMLQDVPCTDRCTLSSACLVGDTWKELTIVAGAVSNELLIWYPATALTDNKPVAPDRRVSGHVGVIFSMSYLESKGLLATASEDRSVRLWKVGDLRVPGGRVQNIGHCFGHSARVWQVKLLENYLISAGEDCVCLVWSHEGEILQAFRGHRGRGIRAIATHERQAWVVTGGDDSGIRLWHLAGRGYPGLGVSSLSFKSPSRPGALKAVTLAGSWRVLAVTDVGSLYLYDLEVKSWEQLLEDNRFRSYCLLEAAPGPEGFGLCALANGEGLVKVVPINTPTAAVEQKLFQGKVHSLSWALRGYEELLLLASGPGGVIACLEISAAPTGKAIFVKERCRYLLPPSKQRWHTCSAFLPPGDFLVCGDRRGSVMLFPVRPCLFKKPGAGSKAITAAEAPGAGSGSGGSESVPTGIGPVSTLHSLHGKQGVTSVTCHGGYLYSTGRDSSYFQLFVHGGHLQPVLRQKACRGMNWVAGLRMVPDGSMVILGFHANEFVVWSPRSHEKLHIVNCGGGHRSWAFSDTEAAMAFTYLKDGEVMLYRALGGCIRPNVILREGLHGREITCVKRVGTVTLGPEFEVPNLEHPDSLEPGSEGPGLIDIVITGSEDTTVCVLALPTTTGSAHALTSVCNHISSVRALAVWAVGTPGGPQDTRPGLTAQVVSAGGRAEIHCFSVMVTPDASTPSRLACHVMHLSSHRLDEYWDRQRNKHKMIKVDPETRYMSLAICELDNDRPGLGPGPLVAAACSDGAVRLFLLQDSGRILHLLAESFHHKRCVLKVHSFTHEAPNQRRRLILCSAATDGSLAFWDLTTAMDKGSTTLELPAHPGLPYQMGTPSMTVQAHSCGVNSLHTLPTPEGHHLVASGSEDGSLHVFTLAVKMPEPEEADGEAELVPQLCVLEEYSVPCAHAAHVTGVKILSPKLMVSASIDQRLTFWRLGQGEPTFMNSTVYHVPDVADMDCWPVSPEFGHRCALAGQGLEVYNWYD</sequence>
<dbReference type="EMBL" id="AF348591">
    <property type="protein sequence ID" value="AAK31166.1"/>
    <property type="molecule type" value="mRNA"/>
</dbReference>
<dbReference type="EMBL" id="AK037181">
    <property type="protein sequence ID" value="BAC29740.1"/>
    <property type="molecule type" value="mRNA"/>
</dbReference>
<dbReference type="EMBL" id="AK146617">
    <property type="protein sequence ID" value="BAE27306.1"/>
    <property type="molecule type" value="mRNA"/>
</dbReference>
<dbReference type="EMBL" id="AK163752">
    <property type="protein sequence ID" value="BAE37480.1"/>
    <property type="molecule type" value="mRNA"/>
</dbReference>
<dbReference type="EMBL" id="CH466560">
    <property type="protein sequence ID" value="EDL21306.1"/>
    <property type="molecule type" value="Genomic_DNA"/>
</dbReference>
<dbReference type="EMBL" id="BC050894">
    <property type="protein sequence ID" value="AAH50894.1"/>
    <property type="molecule type" value="mRNA"/>
</dbReference>
<dbReference type="EMBL" id="BC054367">
    <property type="protein sequence ID" value="AAH54367.1"/>
    <property type="molecule type" value="mRNA"/>
</dbReference>
<dbReference type="CCDS" id="CCDS23532.2"/>
<dbReference type="RefSeq" id="NP_113569.1">
    <property type="nucleotide sequence ID" value="NM_031392.4"/>
</dbReference>
<dbReference type="BioGRID" id="219954">
    <property type="interactions" value="36"/>
</dbReference>
<dbReference type="FunCoup" id="Q99ME2">
    <property type="interactions" value="2394"/>
</dbReference>
<dbReference type="IntAct" id="Q99ME2">
    <property type="interactions" value="1"/>
</dbReference>
<dbReference type="MINT" id="Q99ME2"/>
<dbReference type="STRING" id="10090.ENSMUSP00000070927"/>
<dbReference type="GlyGen" id="Q99ME2">
    <property type="glycosylation" value="1 site"/>
</dbReference>
<dbReference type="iPTMnet" id="Q99ME2"/>
<dbReference type="PhosphoSitePlus" id="Q99ME2"/>
<dbReference type="PaxDb" id="10090-ENSMUSP00000070927"/>
<dbReference type="ProteomicsDB" id="297898"/>
<dbReference type="Pumba" id="Q99ME2"/>
<dbReference type="Antibodypedia" id="13436">
    <property type="antibodies" value="106 antibodies from 26 providers"/>
</dbReference>
<dbReference type="Ensembl" id="ENSMUST00000068700.7">
    <property type="protein sequence ID" value="ENSMUSP00000070927.6"/>
    <property type="gene ID" value="ENSMUSG00000066357.7"/>
</dbReference>
<dbReference type="GeneID" id="83669"/>
<dbReference type="KEGG" id="mmu:83669"/>
<dbReference type="UCSC" id="uc009rqj.1">
    <property type="organism name" value="mouse"/>
</dbReference>
<dbReference type="AGR" id="MGI:1930140"/>
<dbReference type="CTD" id="11180"/>
<dbReference type="MGI" id="MGI:1930140">
    <property type="gene designation" value="Wdr6"/>
</dbReference>
<dbReference type="VEuPathDB" id="HostDB:ENSMUSG00000066357"/>
<dbReference type="eggNOG" id="KOG0974">
    <property type="taxonomic scope" value="Eukaryota"/>
</dbReference>
<dbReference type="GeneTree" id="ENSGT00420000029923"/>
<dbReference type="HOGENOM" id="CLU_002615_0_0_1"/>
<dbReference type="InParanoid" id="Q99ME2"/>
<dbReference type="OMA" id="IIVWSCF"/>
<dbReference type="OrthoDB" id="5594999at2759"/>
<dbReference type="PhylomeDB" id="Q99ME2"/>
<dbReference type="TreeFam" id="TF313984"/>
<dbReference type="Reactome" id="R-MMU-9013420">
    <property type="pathway name" value="RHOU GTPase cycle"/>
</dbReference>
<dbReference type="Reactome" id="R-MMU-9013424">
    <property type="pathway name" value="RHOV GTPase cycle"/>
</dbReference>
<dbReference type="Reactome" id="R-MMU-9696264">
    <property type="pathway name" value="RND3 GTPase cycle"/>
</dbReference>
<dbReference type="Reactome" id="R-MMU-9696270">
    <property type="pathway name" value="RND2 GTPase cycle"/>
</dbReference>
<dbReference type="Reactome" id="R-MMU-9696273">
    <property type="pathway name" value="RND1 GTPase cycle"/>
</dbReference>
<dbReference type="BioGRID-ORCS" id="83669">
    <property type="hits" value="2 hits in 78 CRISPR screens"/>
</dbReference>
<dbReference type="ChiTaRS" id="Wdr6">
    <property type="organism name" value="mouse"/>
</dbReference>
<dbReference type="PRO" id="PR:Q99ME2"/>
<dbReference type="Proteomes" id="UP000000589">
    <property type="component" value="Chromosome 9"/>
</dbReference>
<dbReference type="RNAct" id="Q99ME2">
    <property type="molecule type" value="protein"/>
</dbReference>
<dbReference type="Bgee" id="ENSMUSG00000066357">
    <property type="expression patterns" value="Expressed in medial preoptic region and 259 other cell types or tissues"/>
</dbReference>
<dbReference type="GO" id="GO:0008180">
    <property type="term" value="C:COP9 signalosome"/>
    <property type="evidence" value="ECO:0007669"/>
    <property type="project" value="Ensembl"/>
</dbReference>
<dbReference type="GO" id="GO:0005829">
    <property type="term" value="C:cytosol"/>
    <property type="evidence" value="ECO:0007669"/>
    <property type="project" value="Ensembl"/>
</dbReference>
<dbReference type="GO" id="GO:0005886">
    <property type="term" value="C:plasma membrane"/>
    <property type="evidence" value="ECO:0007669"/>
    <property type="project" value="Ensembl"/>
</dbReference>
<dbReference type="GO" id="GO:0030234">
    <property type="term" value="F:enzyme regulator activity"/>
    <property type="evidence" value="ECO:0000250"/>
    <property type="project" value="UniProtKB"/>
</dbReference>
<dbReference type="GO" id="GO:0000049">
    <property type="term" value="F:tRNA binding"/>
    <property type="evidence" value="ECO:0000250"/>
    <property type="project" value="UniProtKB"/>
</dbReference>
<dbReference type="GO" id="GO:0070314">
    <property type="term" value="P:G1 to G0 transition"/>
    <property type="evidence" value="ECO:0007669"/>
    <property type="project" value="Ensembl"/>
</dbReference>
<dbReference type="GO" id="GO:0010507">
    <property type="term" value="P:negative regulation of autophagy"/>
    <property type="evidence" value="ECO:0007669"/>
    <property type="project" value="Ensembl"/>
</dbReference>
<dbReference type="GO" id="GO:0008285">
    <property type="term" value="P:negative regulation of cell population proliferation"/>
    <property type="evidence" value="ECO:0007669"/>
    <property type="project" value="Ensembl"/>
</dbReference>
<dbReference type="GO" id="GO:0002130">
    <property type="term" value="P:wobble position ribose methylation"/>
    <property type="evidence" value="ECO:0000250"/>
    <property type="project" value="UniProtKB"/>
</dbReference>
<dbReference type="FunFam" id="2.130.10.10:FF:000806">
    <property type="entry name" value="WD repeat-containing protein 6"/>
    <property type="match status" value="1"/>
</dbReference>
<dbReference type="FunFam" id="2.130.10.10:FF:000901">
    <property type="entry name" value="WD repeat-containing protein 6"/>
    <property type="match status" value="1"/>
</dbReference>
<dbReference type="FunFam" id="2.130.10.10:FF:002093">
    <property type="entry name" value="WD repeat-containing protein 6"/>
    <property type="match status" value="1"/>
</dbReference>
<dbReference type="Gene3D" id="2.130.10.10">
    <property type="entry name" value="YVTN repeat-like/Quinoprotein amine dehydrogenase"/>
    <property type="match status" value="4"/>
</dbReference>
<dbReference type="InterPro" id="IPR051973">
    <property type="entry name" value="tRNA_Anticodon_Mtase-Reg"/>
</dbReference>
<dbReference type="InterPro" id="IPR015943">
    <property type="entry name" value="WD40/YVTN_repeat-like_dom_sf"/>
</dbReference>
<dbReference type="InterPro" id="IPR036322">
    <property type="entry name" value="WD40_repeat_dom_sf"/>
</dbReference>
<dbReference type="InterPro" id="IPR001680">
    <property type="entry name" value="WD40_rpt"/>
</dbReference>
<dbReference type="PANTHER" id="PTHR14344">
    <property type="entry name" value="WD REPEAT PROTEIN"/>
    <property type="match status" value="1"/>
</dbReference>
<dbReference type="PANTHER" id="PTHR14344:SF3">
    <property type="entry name" value="WD REPEAT-CONTAINING PROTEIN 6"/>
    <property type="match status" value="1"/>
</dbReference>
<dbReference type="Pfam" id="PF00400">
    <property type="entry name" value="WD40"/>
    <property type="match status" value="3"/>
</dbReference>
<dbReference type="SMART" id="SM00320">
    <property type="entry name" value="WD40"/>
    <property type="match status" value="8"/>
</dbReference>
<dbReference type="SUPFAM" id="SSF117289">
    <property type="entry name" value="Nucleoporin domain"/>
    <property type="match status" value="1"/>
</dbReference>
<dbReference type="SUPFAM" id="SSF50978">
    <property type="entry name" value="WD40 repeat-like"/>
    <property type="match status" value="3"/>
</dbReference>
<dbReference type="PROSITE" id="PS00678">
    <property type="entry name" value="WD_REPEATS_1"/>
    <property type="match status" value="1"/>
</dbReference>
<dbReference type="PROSITE" id="PS50082">
    <property type="entry name" value="WD_REPEATS_2"/>
    <property type="match status" value="1"/>
</dbReference>
<dbReference type="PROSITE" id="PS50294">
    <property type="entry name" value="WD_REPEATS_REGION"/>
    <property type="match status" value="1"/>
</dbReference>
<reference key="1">
    <citation type="submission" date="2001-02" db="EMBL/GenBank/DDBJ databases">
        <title>Cloning and characterization of mWDR6, a novel mouse WD repeat gene.</title>
        <authorList>
            <person name="Li D."/>
            <person name="Roberts R."/>
        </authorList>
    </citation>
    <scope>NUCLEOTIDE SEQUENCE [MRNA]</scope>
    <source>
        <strain>BALB/cJ</strain>
    </source>
</reference>
<reference key="2">
    <citation type="journal article" date="2005" name="Science">
        <title>The transcriptional landscape of the mammalian genome.</title>
        <authorList>
            <person name="Carninci P."/>
            <person name="Kasukawa T."/>
            <person name="Katayama S."/>
            <person name="Gough J."/>
            <person name="Frith M.C."/>
            <person name="Maeda N."/>
            <person name="Oyama R."/>
            <person name="Ravasi T."/>
            <person name="Lenhard B."/>
            <person name="Wells C."/>
            <person name="Kodzius R."/>
            <person name="Shimokawa K."/>
            <person name="Bajic V.B."/>
            <person name="Brenner S.E."/>
            <person name="Batalov S."/>
            <person name="Forrest A.R."/>
            <person name="Zavolan M."/>
            <person name="Davis M.J."/>
            <person name="Wilming L.G."/>
            <person name="Aidinis V."/>
            <person name="Allen J.E."/>
            <person name="Ambesi-Impiombato A."/>
            <person name="Apweiler R."/>
            <person name="Aturaliya R.N."/>
            <person name="Bailey T.L."/>
            <person name="Bansal M."/>
            <person name="Baxter L."/>
            <person name="Beisel K.W."/>
            <person name="Bersano T."/>
            <person name="Bono H."/>
            <person name="Chalk A.M."/>
            <person name="Chiu K.P."/>
            <person name="Choudhary V."/>
            <person name="Christoffels A."/>
            <person name="Clutterbuck D.R."/>
            <person name="Crowe M.L."/>
            <person name="Dalla E."/>
            <person name="Dalrymple B.P."/>
            <person name="de Bono B."/>
            <person name="Della Gatta G."/>
            <person name="di Bernardo D."/>
            <person name="Down T."/>
            <person name="Engstrom P."/>
            <person name="Fagiolini M."/>
            <person name="Faulkner G."/>
            <person name="Fletcher C.F."/>
            <person name="Fukushima T."/>
            <person name="Furuno M."/>
            <person name="Futaki S."/>
            <person name="Gariboldi M."/>
            <person name="Georgii-Hemming P."/>
            <person name="Gingeras T.R."/>
            <person name="Gojobori T."/>
            <person name="Green R.E."/>
            <person name="Gustincich S."/>
            <person name="Harbers M."/>
            <person name="Hayashi Y."/>
            <person name="Hensch T.K."/>
            <person name="Hirokawa N."/>
            <person name="Hill D."/>
            <person name="Huminiecki L."/>
            <person name="Iacono M."/>
            <person name="Ikeo K."/>
            <person name="Iwama A."/>
            <person name="Ishikawa T."/>
            <person name="Jakt M."/>
            <person name="Kanapin A."/>
            <person name="Katoh M."/>
            <person name="Kawasawa Y."/>
            <person name="Kelso J."/>
            <person name="Kitamura H."/>
            <person name="Kitano H."/>
            <person name="Kollias G."/>
            <person name="Krishnan S.P."/>
            <person name="Kruger A."/>
            <person name="Kummerfeld S.K."/>
            <person name="Kurochkin I.V."/>
            <person name="Lareau L.F."/>
            <person name="Lazarevic D."/>
            <person name="Lipovich L."/>
            <person name="Liu J."/>
            <person name="Liuni S."/>
            <person name="McWilliam S."/>
            <person name="Madan Babu M."/>
            <person name="Madera M."/>
            <person name="Marchionni L."/>
            <person name="Matsuda H."/>
            <person name="Matsuzawa S."/>
            <person name="Miki H."/>
            <person name="Mignone F."/>
            <person name="Miyake S."/>
            <person name="Morris K."/>
            <person name="Mottagui-Tabar S."/>
            <person name="Mulder N."/>
            <person name="Nakano N."/>
            <person name="Nakauchi H."/>
            <person name="Ng P."/>
            <person name="Nilsson R."/>
            <person name="Nishiguchi S."/>
            <person name="Nishikawa S."/>
            <person name="Nori F."/>
            <person name="Ohara O."/>
            <person name="Okazaki Y."/>
            <person name="Orlando V."/>
            <person name="Pang K.C."/>
            <person name="Pavan W.J."/>
            <person name="Pavesi G."/>
            <person name="Pesole G."/>
            <person name="Petrovsky N."/>
            <person name="Piazza S."/>
            <person name="Reed J."/>
            <person name="Reid J.F."/>
            <person name="Ring B.Z."/>
            <person name="Ringwald M."/>
            <person name="Rost B."/>
            <person name="Ruan Y."/>
            <person name="Salzberg S.L."/>
            <person name="Sandelin A."/>
            <person name="Schneider C."/>
            <person name="Schoenbach C."/>
            <person name="Sekiguchi K."/>
            <person name="Semple C.A."/>
            <person name="Seno S."/>
            <person name="Sessa L."/>
            <person name="Sheng Y."/>
            <person name="Shibata Y."/>
            <person name="Shimada H."/>
            <person name="Shimada K."/>
            <person name="Silva D."/>
            <person name="Sinclair B."/>
            <person name="Sperling S."/>
            <person name="Stupka E."/>
            <person name="Sugiura K."/>
            <person name="Sultana R."/>
            <person name="Takenaka Y."/>
            <person name="Taki K."/>
            <person name="Tammoja K."/>
            <person name="Tan S.L."/>
            <person name="Tang S."/>
            <person name="Taylor M.S."/>
            <person name="Tegner J."/>
            <person name="Teichmann S.A."/>
            <person name="Ueda H.R."/>
            <person name="van Nimwegen E."/>
            <person name="Verardo R."/>
            <person name="Wei C.L."/>
            <person name="Yagi K."/>
            <person name="Yamanishi H."/>
            <person name="Zabarovsky E."/>
            <person name="Zhu S."/>
            <person name="Zimmer A."/>
            <person name="Hide W."/>
            <person name="Bult C."/>
            <person name="Grimmond S.M."/>
            <person name="Teasdale R.D."/>
            <person name="Liu E.T."/>
            <person name="Brusic V."/>
            <person name="Quackenbush J."/>
            <person name="Wahlestedt C."/>
            <person name="Mattick J.S."/>
            <person name="Hume D.A."/>
            <person name="Kai C."/>
            <person name="Sasaki D."/>
            <person name="Tomaru Y."/>
            <person name="Fukuda S."/>
            <person name="Kanamori-Katayama M."/>
            <person name="Suzuki M."/>
            <person name="Aoki J."/>
            <person name="Arakawa T."/>
            <person name="Iida J."/>
            <person name="Imamura K."/>
            <person name="Itoh M."/>
            <person name="Kato T."/>
            <person name="Kawaji H."/>
            <person name="Kawagashira N."/>
            <person name="Kawashima T."/>
            <person name="Kojima M."/>
            <person name="Kondo S."/>
            <person name="Konno H."/>
            <person name="Nakano K."/>
            <person name="Ninomiya N."/>
            <person name="Nishio T."/>
            <person name="Okada M."/>
            <person name="Plessy C."/>
            <person name="Shibata K."/>
            <person name="Shiraki T."/>
            <person name="Suzuki S."/>
            <person name="Tagami M."/>
            <person name="Waki K."/>
            <person name="Watahiki A."/>
            <person name="Okamura-Oho Y."/>
            <person name="Suzuki H."/>
            <person name="Kawai J."/>
            <person name="Hayashizaki Y."/>
        </authorList>
    </citation>
    <scope>NUCLEOTIDE SEQUENCE [LARGE SCALE MRNA]</scope>
    <source>
        <strain>C57BL/6J</strain>
        <tissue>Corpus striatum</tissue>
        <tissue>Skin</tissue>
        <tissue>Stomach</tissue>
    </source>
</reference>
<reference key="3">
    <citation type="submission" date="2005-07" db="EMBL/GenBank/DDBJ databases">
        <authorList>
            <person name="Mural R.J."/>
            <person name="Adams M.D."/>
            <person name="Myers E.W."/>
            <person name="Smith H.O."/>
            <person name="Venter J.C."/>
        </authorList>
    </citation>
    <scope>NUCLEOTIDE SEQUENCE [LARGE SCALE GENOMIC DNA]</scope>
</reference>
<reference key="4">
    <citation type="journal article" date="2004" name="Genome Res.">
        <title>The status, quality, and expansion of the NIH full-length cDNA project: the Mammalian Gene Collection (MGC).</title>
        <authorList>
            <consortium name="The MGC Project Team"/>
        </authorList>
    </citation>
    <scope>NUCLEOTIDE SEQUENCE [LARGE SCALE MRNA]</scope>
    <source>
        <strain>C57BL/6J</strain>
        <strain>FVB/N</strain>
        <tissue>Brain</tissue>
        <tissue>Mammary tumor</tissue>
    </source>
</reference>
<reference key="5">
    <citation type="journal article" date="2010" name="Cell">
        <title>A tissue-specific atlas of mouse protein phosphorylation and expression.</title>
        <authorList>
            <person name="Huttlin E.L."/>
            <person name="Jedrychowski M.P."/>
            <person name="Elias J.E."/>
            <person name="Goswami T."/>
            <person name="Rad R."/>
            <person name="Beausoleil S.A."/>
            <person name="Villen J."/>
            <person name="Haas W."/>
            <person name="Sowa M.E."/>
            <person name="Gygi S.P."/>
        </authorList>
    </citation>
    <scope>IDENTIFICATION BY MASS SPECTROMETRY [LARGE SCALE ANALYSIS]</scope>
    <source>
        <tissue>Pancreas</tissue>
        <tissue>Spleen</tissue>
    </source>
</reference>
<comment type="function">
    <text evidence="2">Together with methyltransferase FTSJ1, methylates the 2'-O-ribose of nucleotides at position 34 of the tRNA anticodon loop of substrate tRNAs (By similarity). Required for the correct positioning of the substrate tRNA for methylation (By similarity). Required to suppress amino acid starvation-induced autophagy (By similarity). Enhances the STK11/LKB1-induced cell growth suppression activity (By similarity).</text>
</comment>
<comment type="subunit">
    <text evidence="1 2">Interacts with FTSJ1; the interaction is direct, and required for 2'-O-methylation of position 34 in substrate tRNAs (By similarity). Interacts with IRS4 (By similarity). Interacts with STK11/LKB1 (By similarity).</text>
</comment>
<comment type="subcellular location">
    <subcellularLocation>
        <location evidence="2">Cytoplasm</location>
    </subcellularLocation>
    <text evidence="2">Colocalizes in the cytoplasm with STK11/LKB1.</text>
</comment>
<comment type="similarity">
    <text evidence="3">Belongs to the WD repeat WDR6 family.</text>
</comment>
<organism>
    <name type="scientific">Mus musculus</name>
    <name type="common">Mouse</name>
    <dbReference type="NCBI Taxonomy" id="10090"/>
    <lineage>
        <taxon>Eukaryota</taxon>
        <taxon>Metazoa</taxon>
        <taxon>Chordata</taxon>
        <taxon>Craniata</taxon>
        <taxon>Vertebrata</taxon>
        <taxon>Euteleostomi</taxon>
        <taxon>Mammalia</taxon>
        <taxon>Eutheria</taxon>
        <taxon>Euarchontoglires</taxon>
        <taxon>Glires</taxon>
        <taxon>Rodentia</taxon>
        <taxon>Myomorpha</taxon>
        <taxon>Muroidea</taxon>
        <taxon>Muridae</taxon>
        <taxon>Murinae</taxon>
        <taxon>Mus</taxon>
        <taxon>Mus</taxon>
    </lineage>
</organism>